<comment type="function">
    <text>This hormone, released from cells in the corpora cardiaca, causes release of diglycerides from the fat body and stimulation of muscles to use these diglycerides as an energy source during energy-demanding processes.</text>
</comment>
<comment type="subcellular location">
    <subcellularLocation>
        <location>Secreted</location>
    </subcellularLocation>
</comment>
<comment type="similarity">
    <text evidence="2">Belongs to the AKH/HRTH/RPCH family.</text>
</comment>
<dbReference type="EMBL" id="X86801">
    <property type="protein sequence ID" value="CAA60496.1"/>
    <property type="molecule type" value="mRNA"/>
</dbReference>
<dbReference type="PIR" id="C58652">
    <property type="entry name" value="C58652"/>
</dbReference>
<dbReference type="GO" id="GO:0005576">
    <property type="term" value="C:extracellular region"/>
    <property type="evidence" value="ECO:0007669"/>
    <property type="project" value="UniProtKB-SubCell"/>
</dbReference>
<dbReference type="GO" id="GO:0005179">
    <property type="term" value="F:hormone activity"/>
    <property type="evidence" value="ECO:0007669"/>
    <property type="project" value="UniProtKB-KW"/>
</dbReference>
<dbReference type="GO" id="GO:0007629">
    <property type="term" value="P:flight behavior"/>
    <property type="evidence" value="ECO:0007669"/>
    <property type="project" value="UniProtKB-KW"/>
</dbReference>
<dbReference type="GO" id="GO:0007218">
    <property type="term" value="P:neuropeptide signaling pathway"/>
    <property type="evidence" value="ECO:0007669"/>
    <property type="project" value="UniProtKB-KW"/>
</dbReference>
<dbReference type="InterPro" id="IPR002047">
    <property type="entry name" value="Adipokinetic_hormone_CS"/>
</dbReference>
<dbReference type="InterPro" id="IPR010475">
    <property type="entry name" value="AKH/RPCH_hormone"/>
</dbReference>
<dbReference type="Pfam" id="PF06377">
    <property type="entry name" value="Adipokin_hormo"/>
    <property type="match status" value="1"/>
</dbReference>
<dbReference type="PROSITE" id="PS00256">
    <property type="entry name" value="AKH"/>
    <property type="match status" value="1"/>
</dbReference>
<evidence type="ECO:0000269" key="1">
    <source>
    </source>
</evidence>
<evidence type="ECO:0000305" key="2"/>
<organism>
    <name type="scientific">Locusta migratoria</name>
    <name type="common">Migratory locust</name>
    <dbReference type="NCBI Taxonomy" id="7004"/>
    <lineage>
        <taxon>Eukaryota</taxon>
        <taxon>Metazoa</taxon>
        <taxon>Ecdysozoa</taxon>
        <taxon>Arthropoda</taxon>
        <taxon>Hexapoda</taxon>
        <taxon>Insecta</taxon>
        <taxon>Pterygota</taxon>
        <taxon>Neoptera</taxon>
        <taxon>Polyneoptera</taxon>
        <taxon>Orthoptera</taxon>
        <taxon>Caelifera</taxon>
        <taxon>Acrididea</taxon>
        <taxon>Acridomorpha</taxon>
        <taxon>Acridoidea</taxon>
        <taxon>Acrididae</taxon>
        <taxon>Oedipodinae</taxon>
        <taxon>Locusta</taxon>
    </lineage>
</organism>
<keyword id="KW-0027">Amidation</keyword>
<keyword id="KW-0165">Cleavage on pair of basic residues</keyword>
<keyword id="KW-0903">Direct protein sequencing</keyword>
<keyword id="KW-0286">Flight</keyword>
<keyword id="KW-0372">Hormone</keyword>
<keyword id="KW-0527">Neuropeptide</keyword>
<keyword id="KW-0873">Pyrrolidone carboxylic acid</keyword>
<keyword id="KW-0964">Secreted</keyword>
<keyword id="KW-0732">Signal</keyword>
<proteinExistence type="evidence at protein level"/>
<reference key="1">
    <citation type="journal article" date="1995" name="J. Biol. Chem.">
        <title>Molecular cloning of three distinct cDNAs, each encoding a different adipokinetic hormone precursor, of the migratory locust, Locusta migratoria. Differential expression of the distinct adipokinetic hormone precursor genes during flight activity.</title>
        <authorList>
            <person name="Bogerd J."/>
            <person name="Kooiman F.P."/>
            <person name="Pijnenburg M.A.P."/>
            <person name="Hekking L.H."/>
            <person name="Oudejans R.C."/>
            <person name="Vander Horst D.J."/>
        </authorList>
    </citation>
    <scope>NUCLEOTIDE SEQUENCE [MRNA]</scope>
    <source>
        <tissue>Corpora cardiaca</tissue>
    </source>
</reference>
<reference key="2">
    <citation type="journal article" date="1991" name="Eur. J. Biochem.">
        <title>Isolation and structure elucidation of a novel adipokinetic hormone (Lom-AKH-III) from the glandular lobes of the corpus cardiacum of the migratory locust, Locusta migratoria.</title>
        <authorList>
            <person name="Oudejans R.C.H.M."/>
            <person name="Kooiman F.P."/>
            <person name="Heerma W."/>
            <person name="Versluis C."/>
            <person name="Slotboom A.J."/>
            <person name="Beenakkers A.M.T."/>
        </authorList>
    </citation>
    <scope>PROTEIN SEQUENCE OF 23-30</scope>
    <scope>PYROGLUTAMATE FORMATION AT GLN-23</scope>
    <scope>AMIDATION AT TRP-30</scope>
    <source>
        <tissue>Corpora cardiaca</tissue>
    </source>
</reference>
<accession>P19872</accession>
<protein>
    <recommendedName>
        <fullName>Adipokinetic prohormone type 3</fullName>
    </recommendedName>
    <component>
        <recommendedName>
            <fullName>Adipokinetic hormone 3</fullName>
        </recommendedName>
        <alternativeName>
            <fullName>Adipokinetic hormone III</fullName>
            <shortName>AKH-III</shortName>
        </alternativeName>
    </component>
    <component>
        <recommendedName>
            <fullName>Adipokinetic hormone precursor-related peptide gamma chain</fullName>
            <shortName>APRP-gamma</shortName>
        </recommendedName>
    </component>
</protein>
<name>AKH3_LOCMI</name>
<feature type="signal peptide" evidence="1">
    <location>
        <begin position="1"/>
        <end position="22"/>
    </location>
</feature>
<feature type="chain" id="PRO_0000000911" description="Adipokinetic prohormone type 3">
    <location>
        <begin position="23"/>
        <end position="77"/>
    </location>
</feature>
<feature type="peptide" id="PRO_0000000912" description="Adipokinetic hormone 3">
    <location>
        <begin position="23"/>
        <end position="30"/>
    </location>
</feature>
<feature type="peptide" id="PRO_0000000913" description="Adipokinetic hormone precursor-related peptide gamma chain">
    <location>
        <begin position="34"/>
        <end position="77"/>
    </location>
</feature>
<feature type="modified residue" description="Pyrrolidone carboxylic acid" evidence="1">
    <location>
        <position position="23"/>
    </location>
</feature>
<feature type="modified residue" description="Tryptophan amide" evidence="1">
    <location>
        <position position="30"/>
    </location>
</feature>
<sequence>MQVRAVLVLAVVALVAVATSRAQLNFTPWWGKRALGAPAAGDCVSASPQALLSILNAAQAEVQKLIDCSRFTSEANS</sequence>